<reference key="1">
    <citation type="journal article" date="2008" name="DNA Res.">
        <title>Determination of the genome sequence of Porphyromonas gingivalis strain ATCC 33277 and genomic comparison with strain W83 revealed extensive genome rearrangements in P. gingivalis.</title>
        <authorList>
            <person name="Naito M."/>
            <person name="Hirakawa H."/>
            <person name="Yamashita A."/>
            <person name="Ohara N."/>
            <person name="Shoji M."/>
            <person name="Yukitake H."/>
            <person name="Nakayama K."/>
            <person name="Toh H."/>
            <person name="Yoshimura F."/>
            <person name="Kuhara S."/>
            <person name="Hattori M."/>
            <person name="Hayashi T."/>
            <person name="Nakayama K."/>
        </authorList>
    </citation>
    <scope>NUCLEOTIDE SEQUENCE [LARGE SCALE GENOMIC DNA]</scope>
    <source>
        <strain>ATCC 33277 / DSM 20709 / CIP 103683 / JCM 12257 / NCTC 11834 / 2561</strain>
    </source>
</reference>
<comment type="function">
    <text evidence="1">Carrier of the growing fatty acid chain in fatty acid biosynthesis.</text>
</comment>
<comment type="pathway">
    <text evidence="1">Lipid metabolism; fatty acid biosynthesis.</text>
</comment>
<comment type="subcellular location">
    <subcellularLocation>
        <location evidence="1">Cytoplasm</location>
    </subcellularLocation>
</comment>
<comment type="PTM">
    <text evidence="1">4'-phosphopantetheine is transferred from CoA to a specific serine of apo-ACP by AcpS. This modification is essential for activity because fatty acids are bound in thioester linkage to the sulfhydryl of the prosthetic group.</text>
</comment>
<comment type="similarity">
    <text evidence="1">Belongs to the acyl carrier protein (ACP) family.</text>
</comment>
<gene>
    <name evidence="1" type="primary">acpP</name>
    <name type="ordered locus">PGN_1705</name>
</gene>
<protein>
    <recommendedName>
        <fullName evidence="1">Acyl carrier protein</fullName>
        <shortName evidence="1">ACP</shortName>
    </recommendedName>
</protein>
<evidence type="ECO:0000255" key="1">
    <source>
        <dbReference type="HAMAP-Rule" id="MF_01217"/>
    </source>
</evidence>
<evidence type="ECO:0000255" key="2">
    <source>
        <dbReference type="PROSITE-ProRule" id="PRU00258"/>
    </source>
</evidence>
<sequence>MSEVEKKVIDLVVDKLNVEASEVTREASFSNDLGADSLDTVELMMNFEKEFNMSIPDDQAQEIKTVGDAIDYIEKNLK</sequence>
<feature type="chain" id="PRO_1000139051" description="Acyl carrier protein">
    <location>
        <begin position="1"/>
        <end position="78"/>
    </location>
</feature>
<feature type="domain" description="Carrier" evidence="2">
    <location>
        <begin position="1"/>
        <end position="77"/>
    </location>
</feature>
<feature type="modified residue" description="O-(pantetheine 4'-phosphoryl)serine" evidence="2">
    <location>
        <position position="37"/>
    </location>
</feature>
<keyword id="KW-0963">Cytoplasm</keyword>
<keyword id="KW-0275">Fatty acid biosynthesis</keyword>
<keyword id="KW-0276">Fatty acid metabolism</keyword>
<keyword id="KW-0444">Lipid biosynthesis</keyword>
<keyword id="KW-0443">Lipid metabolism</keyword>
<keyword id="KW-0596">Phosphopantetheine</keyword>
<keyword id="KW-0597">Phosphoprotein</keyword>
<accession>B2RLH9</accession>
<dbReference type="EMBL" id="AP009380">
    <property type="protein sequence ID" value="BAG34224.1"/>
    <property type="molecule type" value="Genomic_DNA"/>
</dbReference>
<dbReference type="RefSeq" id="WP_004584733.1">
    <property type="nucleotide sequence ID" value="NZ_CP025930.1"/>
</dbReference>
<dbReference type="SMR" id="B2RLH9"/>
<dbReference type="KEGG" id="pgn:PGN_1705"/>
<dbReference type="eggNOG" id="COG0236">
    <property type="taxonomic scope" value="Bacteria"/>
</dbReference>
<dbReference type="HOGENOM" id="CLU_108696_5_1_10"/>
<dbReference type="OrthoDB" id="9804551at2"/>
<dbReference type="BioCyc" id="PGIN431947:G1G2V-1913-MONOMER"/>
<dbReference type="UniPathway" id="UPA00094"/>
<dbReference type="Proteomes" id="UP000008842">
    <property type="component" value="Chromosome"/>
</dbReference>
<dbReference type="GO" id="GO:0005829">
    <property type="term" value="C:cytosol"/>
    <property type="evidence" value="ECO:0007669"/>
    <property type="project" value="TreeGrafter"/>
</dbReference>
<dbReference type="GO" id="GO:0016020">
    <property type="term" value="C:membrane"/>
    <property type="evidence" value="ECO:0007669"/>
    <property type="project" value="GOC"/>
</dbReference>
<dbReference type="GO" id="GO:0000035">
    <property type="term" value="F:acyl binding"/>
    <property type="evidence" value="ECO:0007669"/>
    <property type="project" value="TreeGrafter"/>
</dbReference>
<dbReference type="GO" id="GO:0000036">
    <property type="term" value="F:acyl carrier activity"/>
    <property type="evidence" value="ECO:0007669"/>
    <property type="project" value="UniProtKB-UniRule"/>
</dbReference>
<dbReference type="GO" id="GO:0009245">
    <property type="term" value="P:lipid A biosynthetic process"/>
    <property type="evidence" value="ECO:0007669"/>
    <property type="project" value="TreeGrafter"/>
</dbReference>
<dbReference type="FunFam" id="1.10.1200.10:FF:000003">
    <property type="entry name" value="Acyl carrier protein"/>
    <property type="match status" value="1"/>
</dbReference>
<dbReference type="Gene3D" id="1.10.1200.10">
    <property type="entry name" value="ACP-like"/>
    <property type="match status" value="1"/>
</dbReference>
<dbReference type="HAMAP" id="MF_01217">
    <property type="entry name" value="Acyl_carrier"/>
    <property type="match status" value="1"/>
</dbReference>
<dbReference type="InterPro" id="IPR003231">
    <property type="entry name" value="ACP"/>
</dbReference>
<dbReference type="InterPro" id="IPR036736">
    <property type="entry name" value="ACP-like_sf"/>
</dbReference>
<dbReference type="InterPro" id="IPR009081">
    <property type="entry name" value="PP-bd_ACP"/>
</dbReference>
<dbReference type="NCBIfam" id="TIGR00517">
    <property type="entry name" value="acyl_carrier"/>
    <property type="match status" value="1"/>
</dbReference>
<dbReference type="NCBIfam" id="NF002148">
    <property type="entry name" value="PRK00982.1-2"/>
    <property type="match status" value="1"/>
</dbReference>
<dbReference type="NCBIfam" id="NF002150">
    <property type="entry name" value="PRK00982.1-4"/>
    <property type="match status" value="1"/>
</dbReference>
<dbReference type="NCBIfam" id="NF002151">
    <property type="entry name" value="PRK00982.1-5"/>
    <property type="match status" value="1"/>
</dbReference>
<dbReference type="PANTHER" id="PTHR20863">
    <property type="entry name" value="ACYL CARRIER PROTEIN"/>
    <property type="match status" value="1"/>
</dbReference>
<dbReference type="PANTHER" id="PTHR20863:SF76">
    <property type="entry name" value="CARRIER DOMAIN-CONTAINING PROTEIN"/>
    <property type="match status" value="1"/>
</dbReference>
<dbReference type="Pfam" id="PF00550">
    <property type="entry name" value="PP-binding"/>
    <property type="match status" value="1"/>
</dbReference>
<dbReference type="SUPFAM" id="SSF47336">
    <property type="entry name" value="ACP-like"/>
    <property type="match status" value="1"/>
</dbReference>
<dbReference type="PROSITE" id="PS50075">
    <property type="entry name" value="CARRIER"/>
    <property type="match status" value="1"/>
</dbReference>
<name>ACP_PORG3</name>
<organism>
    <name type="scientific">Porphyromonas gingivalis (strain ATCC 33277 / DSM 20709 / CIP 103683 / JCM 12257 / NCTC 11834 / 2561)</name>
    <dbReference type="NCBI Taxonomy" id="431947"/>
    <lineage>
        <taxon>Bacteria</taxon>
        <taxon>Pseudomonadati</taxon>
        <taxon>Bacteroidota</taxon>
        <taxon>Bacteroidia</taxon>
        <taxon>Bacteroidales</taxon>
        <taxon>Porphyromonadaceae</taxon>
        <taxon>Porphyromonas</taxon>
    </lineage>
</organism>
<proteinExistence type="inferred from homology"/>